<reference key="1">
    <citation type="submission" date="2006-12" db="EMBL/GenBank/DDBJ databases">
        <authorList>
            <person name="Hendrix L."/>
            <person name="Mohamoud Y."/>
            <person name="Radune D."/>
            <person name="Shvartsbeyn A."/>
            <person name="Daugherty S."/>
            <person name="Dodson R."/>
            <person name="Durkin A.S."/>
            <person name="Harkins D."/>
            <person name="Huot H."/>
            <person name="Kothari S.P."/>
            <person name="Madupu R."/>
            <person name="Li J."/>
            <person name="Nelson W.C."/>
            <person name="Shrivastava S."/>
            <person name="Giglio M.G."/>
            <person name="Haft D."/>
            <person name="Selengut J."/>
            <person name="Fraser-Ligget C."/>
            <person name="Seshadri R."/>
        </authorList>
    </citation>
    <scope>NUCLEOTIDE SEQUENCE [LARGE SCALE GENOMIC DNA]</scope>
    <source>
        <strain>ATCC 35685 / KC583 / Herrer 020/F12,63</strain>
    </source>
</reference>
<name>HSLU_BARBK</name>
<organism>
    <name type="scientific">Bartonella bacilliformis (strain ATCC 35685 / KC583 / Herrer 020/F12,63)</name>
    <dbReference type="NCBI Taxonomy" id="360095"/>
    <lineage>
        <taxon>Bacteria</taxon>
        <taxon>Pseudomonadati</taxon>
        <taxon>Pseudomonadota</taxon>
        <taxon>Alphaproteobacteria</taxon>
        <taxon>Hyphomicrobiales</taxon>
        <taxon>Bartonellaceae</taxon>
        <taxon>Bartonella</taxon>
    </lineage>
</organism>
<comment type="function">
    <text evidence="1">ATPase subunit of a proteasome-like degradation complex; this subunit has chaperone activity. The binding of ATP and its subsequent hydrolysis by HslU are essential for unfolding of protein substrates subsequently hydrolyzed by HslV. HslU recognizes the N-terminal part of its protein substrates and unfolds these before they are guided to HslV for hydrolysis.</text>
</comment>
<comment type="subunit">
    <text evidence="1">A double ring-shaped homohexamer of HslV is capped on each side by a ring-shaped HslU homohexamer. The assembly of the HslU/HslV complex is dependent on binding of ATP.</text>
</comment>
<comment type="subcellular location">
    <subcellularLocation>
        <location evidence="1">Cytoplasm</location>
    </subcellularLocation>
</comment>
<comment type="similarity">
    <text evidence="1">Belongs to the ClpX chaperone family. HslU subfamily.</text>
</comment>
<sequence length="436" mass="48360">MCVVFSPREIVSELDRFIIGQKDAKRSVAIALRNRWRRQQLEGQIREEVMPKNILMIGPTGVGKTEIARRLAKLAGAPFVKVEATKFTEVGYVGRDVEQIIRDLVEIAISLVREKKRDEVQERAHINAEERVLEALVGKTASPATRDNFRQKLRAGELDDKEIEIEVANNSNNSAPTFDIPGMPGAQMGIMNLSDIFGKIGGRTKIRKTTVKDAFKPLIDDESEKLLDQDQIIQEALCITENDGIVFIDEIDKIATQDGGAGAAISREGVQRDLLPLVEGTIVATKYGQIKTDHILFIASGAFHVSKPSDLLPELQGRLPIRVELNALTKEDLRRILTEPEASLIKQYIALMATEDVHLEITDDAIDTLADIAVDLNARIENIGARRLQTVMERVLDEISFTAPDKAGTSFKVDATYVRQSVGELASDVDLSRFIL</sequence>
<protein>
    <recommendedName>
        <fullName evidence="1">ATP-dependent protease ATPase subunit HslU</fullName>
    </recommendedName>
    <alternativeName>
        <fullName evidence="1">Unfoldase HslU</fullName>
    </alternativeName>
</protein>
<feature type="chain" id="PRO_1000012702" description="ATP-dependent protease ATPase subunit HslU">
    <location>
        <begin position="1"/>
        <end position="436"/>
    </location>
</feature>
<feature type="binding site" evidence="1">
    <location>
        <position position="19"/>
    </location>
    <ligand>
        <name>ATP</name>
        <dbReference type="ChEBI" id="CHEBI:30616"/>
    </ligand>
</feature>
<feature type="binding site" evidence="1">
    <location>
        <begin position="61"/>
        <end position="66"/>
    </location>
    <ligand>
        <name>ATP</name>
        <dbReference type="ChEBI" id="CHEBI:30616"/>
    </ligand>
</feature>
<feature type="binding site" evidence="1">
    <location>
        <position position="249"/>
    </location>
    <ligand>
        <name>ATP</name>
        <dbReference type="ChEBI" id="CHEBI:30616"/>
    </ligand>
</feature>
<feature type="binding site" evidence="1">
    <location>
        <position position="314"/>
    </location>
    <ligand>
        <name>ATP</name>
        <dbReference type="ChEBI" id="CHEBI:30616"/>
    </ligand>
</feature>
<feature type="binding site" evidence="1">
    <location>
        <position position="386"/>
    </location>
    <ligand>
        <name>ATP</name>
        <dbReference type="ChEBI" id="CHEBI:30616"/>
    </ligand>
</feature>
<accession>A1UU56</accession>
<evidence type="ECO:0000255" key="1">
    <source>
        <dbReference type="HAMAP-Rule" id="MF_00249"/>
    </source>
</evidence>
<dbReference type="EMBL" id="CP000524">
    <property type="protein sequence ID" value="ABM45566.1"/>
    <property type="molecule type" value="Genomic_DNA"/>
</dbReference>
<dbReference type="RefSeq" id="WP_005767996.1">
    <property type="nucleotide sequence ID" value="NC_008783.1"/>
</dbReference>
<dbReference type="SMR" id="A1UU56"/>
<dbReference type="STRING" id="360095.BARBAKC583_1260"/>
<dbReference type="GeneID" id="4685115"/>
<dbReference type="KEGG" id="bbk:BARBAKC583_1260"/>
<dbReference type="PATRIC" id="fig|360095.6.peg.1236"/>
<dbReference type="eggNOG" id="COG1220">
    <property type="taxonomic scope" value="Bacteria"/>
</dbReference>
<dbReference type="HOGENOM" id="CLU_033123_0_0_5"/>
<dbReference type="OrthoDB" id="9804062at2"/>
<dbReference type="Proteomes" id="UP000000643">
    <property type="component" value="Chromosome"/>
</dbReference>
<dbReference type="GO" id="GO:0009376">
    <property type="term" value="C:HslUV protease complex"/>
    <property type="evidence" value="ECO:0007669"/>
    <property type="project" value="UniProtKB-UniRule"/>
</dbReference>
<dbReference type="GO" id="GO:0005524">
    <property type="term" value="F:ATP binding"/>
    <property type="evidence" value="ECO:0007669"/>
    <property type="project" value="UniProtKB-UniRule"/>
</dbReference>
<dbReference type="GO" id="GO:0016887">
    <property type="term" value="F:ATP hydrolysis activity"/>
    <property type="evidence" value="ECO:0007669"/>
    <property type="project" value="InterPro"/>
</dbReference>
<dbReference type="GO" id="GO:0008233">
    <property type="term" value="F:peptidase activity"/>
    <property type="evidence" value="ECO:0007669"/>
    <property type="project" value="InterPro"/>
</dbReference>
<dbReference type="GO" id="GO:0036402">
    <property type="term" value="F:proteasome-activating activity"/>
    <property type="evidence" value="ECO:0007669"/>
    <property type="project" value="UniProtKB-UniRule"/>
</dbReference>
<dbReference type="GO" id="GO:0043335">
    <property type="term" value="P:protein unfolding"/>
    <property type="evidence" value="ECO:0007669"/>
    <property type="project" value="UniProtKB-UniRule"/>
</dbReference>
<dbReference type="GO" id="GO:0051603">
    <property type="term" value="P:proteolysis involved in protein catabolic process"/>
    <property type="evidence" value="ECO:0007669"/>
    <property type="project" value="TreeGrafter"/>
</dbReference>
<dbReference type="CDD" id="cd19498">
    <property type="entry name" value="RecA-like_HslU"/>
    <property type="match status" value="1"/>
</dbReference>
<dbReference type="FunFam" id="3.40.50.300:FF:000220">
    <property type="entry name" value="ATP-dependent protease ATPase subunit HslU"/>
    <property type="match status" value="1"/>
</dbReference>
<dbReference type="Gene3D" id="1.10.8.60">
    <property type="match status" value="1"/>
</dbReference>
<dbReference type="Gene3D" id="1.10.8.10">
    <property type="entry name" value="DNA helicase RuvA subunit, C-terminal domain"/>
    <property type="match status" value="1"/>
</dbReference>
<dbReference type="Gene3D" id="3.40.50.300">
    <property type="entry name" value="P-loop containing nucleotide triphosphate hydrolases"/>
    <property type="match status" value="2"/>
</dbReference>
<dbReference type="HAMAP" id="MF_00249">
    <property type="entry name" value="HslU"/>
    <property type="match status" value="1"/>
</dbReference>
<dbReference type="InterPro" id="IPR003593">
    <property type="entry name" value="AAA+_ATPase"/>
</dbReference>
<dbReference type="InterPro" id="IPR050052">
    <property type="entry name" value="ATP-dep_Clp_protease_ClpX"/>
</dbReference>
<dbReference type="InterPro" id="IPR003959">
    <property type="entry name" value="ATPase_AAA_core"/>
</dbReference>
<dbReference type="InterPro" id="IPR019489">
    <property type="entry name" value="Clp_ATPase_C"/>
</dbReference>
<dbReference type="InterPro" id="IPR004491">
    <property type="entry name" value="HslU"/>
</dbReference>
<dbReference type="InterPro" id="IPR027417">
    <property type="entry name" value="P-loop_NTPase"/>
</dbReference>
<dbReference type="NCBIfam" id="TIGR00390">
    <property type="entry name" value="hslU"/>
    <property type="match status" value="1"/>
</dbReference>
<dbReference type="NCBIfam" id="NF003544">
    <property type="entry name" value="PRK05201.1"/>
    <property type="match status" value="1"/>
</dbReference>
<dbReference type="PANTHER" id="PTHR48102">
    <property type="entry name" value="ATP-DEPENDENT CLP PROTEASE ATP-BINDING SUBUNIT CLPX-LIKE, MITOCHONDRIAL-RELATED"/>
    <property type="match status" value="1"/>
</dbReference>
<dbReference type="PANTHER" id="PTHR48102:SF3">
    <property type="entry name" value="ATP-DEPENDENT PROTEASE ATPASE SUBUNIT HSLU"/>
    <property type="match status" value="1"/>
</dbReference>
<dbReference type="Pfam" id="PF00004">
    <property type="entry name" value="AAA"/>
    <property type="match status" value="1"/>
</dbReference>
<dbReference type="Pfam" id="PF07724">
    <property type="entry name" value="AAA_2"/>
    <property type="match status" value="1"/>
</dbReference>
<dbReference type="Pfam" id="PF10431">
    <property type="entry name" value="ClpB_D2-small"/>
    <property type="match status" value="1"/>
</dbReference>
<dbReference type="SMART" id="SM00382">
    <property type="entry name" value="AAA"/>
    <property type="match status" value="1"/>
</dbReference>
<dbReference type="SMART" id="SM01086">
    <property type="entry name" value="ClpB_D2-small"/>
    <property type="match status" value="1"/>
</dbReference>
<dbReference type="SUPFAM" id="SSF52540">
    <property type="entry name" value="P-loop containing nucleoside triphosphate hydrolases"/>
    <property type="match status" value="1"/>
</dbReference>
<keyword id="KW-0067">ATP-binding</keyword>
<keyword id="KW-0143">Chaperone</keyword>
<keyword id="KW-0963">Cytoplasm</keyword>
<keyword id="KW-0547">Nucleotide-binding</keyword>
<keyword id="KW-0346">Stress response</keyword>
<gene>
    <name evidence="1" type="primary">hslU</name>
    <name type="ordered locus">BARBAKC583_1260</name>
</gene>
<proteinExistence type="inferred from homology"/>